<sequence>MGIPVEVLTKFIGQKVKDVYGRDAGVIVHVYTEIDGTITGIELFKGEEIKTYSPNSVKVDGDSVVILPDWKTDSLKVLGQMEKIRKRQRALEELYSRQEIPKSTYEDMKRKLDSELLKIRDEHSRLKGRLKDRLNSIEDQVAQIDRAMIALKINYISGEIPELAYKNSMEILRLSRDSYALERDDIKKTLDKLDGLDKEVIELKPSASLNTSTEQSNKNEGNKSEVSVPIPVRVINTL</sequence>
<name>CDVA_SULAC</name>
<proteinExistence type="evidence at protein level"/>
<evidence type="ECO:0000269" key="1">
    <source>
    </source>
</evidence>
<evidence type="ECO:0000269" key="2">
    <source>
    </source>
</evidence>
<evidence type="ECO:0000303" key="3">
    <source>
    </source>
</evidence>
<evidence type="ECO:0000305" key="4"/>
<evidence type="ECO:0000305" key="5">
    <source>
    </source>
</evidence>
<evidence type="ECO:0000312" key="6">
    <source>
        <dbReference type="EMBL" id="AAY80708.1"/>
    </source>
</evidence>
<gene>
    <name evidence="3" type="primary">cdvA</name>
    <name evidence="6" type="ordered locus">Saci_1374</name>
</gene>
<reference key="1">
    <citation type="journal article" date="2005" name="J. Bacteriol.">
        <title>The genome of Sulfolobus acidocaldarius, a model organism of the Crenarchaeota.</title>
        <authorList>
            <person name="Chen L."/>
            <person name="Bruegger K."/>
            <person name="Skovgaard M."/>
            <person name="Redder P."/>
            <person name="She Q."/>
            <person name="Torarinsson E."/>
            <person name="Greve B."/>
            <person name="Awayez M."/>
            <person name="Zibat A."/>
            <person name="Klenk H.-P."/>
            <person name="Garrett R.A."/>
        </authorList>
    </citation>
    <scope>NUCLEOTIDE SEQUENCE [LARGE SCALE GENOMIC DNA]</scope>
    <source>
        <strain>ATCC 33909 / DSM 639 / JCM 8929 / NBRC 15157 / NCIMB 11770</strain>
    </source>
</reference>
<reference key="2">
    <citation type="journal article" date="2008" name="Proc. Natl. Acad. Sci. U.S.A.">
        <title>A unique cell division machinery in the Archaea.</title>
        <authorList>
            <person name="Lindaas A.C."/>
            <person name="Karlsson E.A."/>
            <person name="Lindgren M.T."/>
            <person name="Ettema T.J."/>
            <person name="Bernander R."/>
        </authorList>
    </citation>
    <scope>FUNCTION</scope>
    <scope>SUBCELLULAR LOCATION</scope>
    <scope>INDUCTION</scope>
    <source>
        <strain>ATCC 33909 / DSM 639 / JCM 8929 / NBRC 15157 / NCIMB 11770</strain>
    </source>
</reference>
<reference key="3">
    <citation type="journal article" date="2011" name="Mol. Cell">
        <title>Molecular and structural basis of ESCRT-III recruitment to membranes during archaeal cell division.</title>
        <authorList>
            <person name="Samson R.Y."/>
            <person name="Obita T."/>
            <person name="Hodgson B."/>
            <person name="Shaw M.K."/>
            <person name="Chong P.L."/>
            <person name="Williams R.L."/>
            <person name="Bell S.D."/>
        </authorList>
    </citation>
    <scope>FUNCTION</scope>
    <scope>INTERACTION WITH CDVB</scope>
    <scope>SUBCELLULAR LOCATION</scope>
    <scope>DOMAIN</scope>
    <scope>MUTAGENESIS OF VAL-232 AND VAL-234</scope>
    <source>
        <strain>ATCC 33909 / DSM 639 / JCM 8929 / NBRC 15157 / NCIMB 11770</strain>
    </source>
</reference>
<organism>
    <name type="scientific">Sulfolobus acidocaldarius (strain ATCC 33909 / DSM 639 / JCM 8929 / NBRC 15157 / NCIMB 11770)</name>
    <dbReference type="NCBI Taxonomy" id="330779"/>
    <lineage>
        <taxon>Archaea</taxon>
        <taxon>Thermoproteota</taxon>
        <taxon>Thermoprotei</taxon>
        <taxon>Sulfolobales</taxon>
        <taxon>Sulfolobaceae</taxon>
        <taxon>Sulfolobus</taxon>
    </lineage>
</organism>
<dbReference type="EMBL" id="CP000077">
    <property type="protein sequence ID" value="AAY80708.1"/>
    <property type="molecule type" value="Genomic_DNA"/>
</dbReference>
<dbReference type="RefSeq" id="WP_011278210.1">
    <property type="nucleotide sequence ID" value="NC_007181.1"/>
</dbReference>
<dbReference type="SMR" id="Q4J923"/>
<dbReference type="STRING" id="330779.Saci_1374"/>
<dbReference type="TCDB" id="3.A.31.1.3">
    <property type="family name" value="the endosomal sorting complexes required for transport iii (escrt-iii) family"/>
</dbReference>
<dbReference type="GeneID" id="14551876"/>
<dbReference type="GeneID" id="78441720"/>
<dbReference type="KEGG" id="sai:Saci_1374"/>
<dbReference type="PATRIC" id="fig|330779.12.peg.1326"/>
<dbReference type="eggNOG" id="arCOG04054">
    <property type="taxonomic scope" value="Archaea"/>
</dbReference>
<dbReference type="HOGENOM" id="CLU_100857_0_0_2"/>
<dbReference type="Proteomes" id="UP000001018">
    <property type="component" value="Chromosome"/>
</dbReference>
<dbReference type="GO" id="GO:0005737">
    <property type="term" value="C:cytoplasm"/>
    <property type="evidence" value="ECO:0007669"/>
    <property type="project" value="UniProtKB-KW"/>
</dbReference>
<dbReference type="GO" id="GO:0009295">
    <property type="term" value="C:nucleoid"/>
    <property type="evidence" value="ECO:0007669"/>
    <property type="project" value="UniProtKB-SubCell"/>
</dbReference>
<dbReference type="GO" id="GO:0005886">
    <property type="term" value="C:plasma membrane"/>
    <property type="evidence" value="ECO:0007669"/>
    <property type="project" value="UniProtKB-SubCell"/>
</dbReference>
<dbReference type="GO" id="GO:0051301">
    <property type="term" value="P:cell division"/>
    <property type="evidence" value="ECO:0007669"/>
    <property type="project" value="UniProtKB-KW"/>
</dbReference>
<dbReference type="InterPro" id="IPR041461">
    <property type="entry name" value="CdvA_CC"/>
</dbReference>
<dbReference type="InterPro" id="IPR053653">
    <property type="entry name" value="Cell_Div_Membrane-Interact"/>
</dbReference>
<dbReference type="NCBIfam" id="NF041007">
    <property type="entry name" value="cell_div_CdvA"/>
    <property type="match status" value="1"/>
</dbReference>
<dbReference type="Pfam" id="PF18822">
    <property type="entry name" value="CdvA"/>
    <property type="match status" value="1"/>
</dbReference>
<feature type="chain" id="PRO_0000438765" description="Cell division protein A">
    <location>
        <begin position="1"/>
        <end position="238"/>
    </location>
</feature>
<feature type="mutagenesis site" description="Loss of interaction with CdvB; when associated with D-234." evidence="2">
    <original>V</original>
    <variation>D</variation>
    <location>
        <position position="232"/>
    </location>
</feature>
<feature type="mutagenesis site" description="Loss of interaction with CdvB; when associated with D-232." evidence="2">
    <original>V</original>
    <variation>D</variation>
    <location>
        <position position="234"/>
    </location>
</feature>
<keyword id="KW-0131">Cell cycle</keyword>
<keyword id="KW-0132">Cell division</keyword>
<keyword id="KW-1003">Cell membrane</keyword>
<keyword id="KW-0963">Cytoplasm</keyword>
<keyword id="KW-0472">Membrane</keyword>
<keyword id="KW-1185">Reference proteome</keyword>
<protein>
    <recommendedName>
        <fullName evidence="4">Cell division protein A</fullName>
    </recommendedName>
</protein>
<comment type="function">
    <text evidence="1 2">Part of a cell division machinery (PubMed:18987308, PubMed:21255729). The CdvA, CdvB and CdvC proteins polymerize between segregating nucleoids and persist throughout cell division, forming a successively smaller structure during constriction (PubMed:18987308). CdvA is a membrane interacting protein that recruits ESCRT-III homologs to the membrane (PubMed:21255729).</text>
</comment>
<comment type="subunit">
    <text evidence="2">Interacts with CdvB.</text>
</comment>
<comment type="subcellular location">
    <subcellularLocation>
        <location evidence="1">Cytoplasm</location>
        <location evidence="1">Nucleoid</location>
    </subcellularLocation>
    <subcellularLocation>
        <location evidence="5">Cell membrane</location>
        <topology evidence="5">Peripheral membrane protein</topology>
    </subcellularLocation>
    <text evidence="1">Forms, with CdvB, colocalized band-like structures between segregating nucleoids.</text>
</comment>
<comment type="induction">
    <text evidence="1">Induced around the genome segregation and cell division stages. Down-regulated after UV irradiation, indicating division inhibition in response to DNA damage.</text>
</comment>
<comment type="domain">
    <text evidence="2">The C-terminal 18 residues mediate the interaction with the wH-like region of CdvB.</text>
</comment>
<accession>Q4J923</accession>